<proteinExistence type="evidence at protein level"/>
<comment type="function">
    <text evidence="4">Insecticidal neurotoxin that modulates the insect Nav channel (DmNaV1/tipE (para/tipE)) in a unique manner, with both the activation and inactivation processes being affected. The voltage dependence of activation is shifted toward more hyperpolarized potentials (analogous to site 4 toxins) and a non-inactivating persistent sodium current is induced (site 3-like action). Interestingly, both effects take place in a voltage-dependent manner, producing a bell-shaped curve between -80 and 0 mV.</text>
</comment>
<comment type="subcellular location">
    <subcellularLocation>
        <location evidence="4">Secreted</location>
    </subcellularLocation>
</comment>
<comment type="tissue specificity">
    <text evidence="4">Expressed by the venom gland.</text>
</comment>
<comment type="domain">
    <text evidence="1">The presence of a 'disulfide through disulfide knot' structurally defines this protein as a knottin.</text>
</comment>
<comment type="mass spectrometry" mass="4214.5" error="0.5" method="MALDI" evidence="4"/>
<comment type="miscellaneous">
    <text evidence="1">Negative results: does not affect mammalian sodium channels (Nav).</text>
</comment>
<comment type="similarity">
    <text evidence="6">Belongs to the neurotoxin 07 (Beta/delta-agtx) family. 03 (aga-4) subfamily. Aga sub-subfamily.</text>
</comment>
<sequence length="74" mass="8141">MRAIISLLLISTMVFGVIEAVSVEEGLKIFEGERGGCVGESQQCADWSGPYCCKGYYCTCRYFPKCICVNDNGK</sequence>
<reference key="1">
    <citation type="journal article" date="2005" name="Proteins">
        <title>A novel strategy for the identification of toxinlike structures in spider venom.</title>
        <authorList>
            <person name="Kozlov S.A."/>
            <person name="Malyavka A."/>
            <person name="McCutchen B."/>
            <person name="Lu A."/>
            <person name="Schepers E."/>
            <person name="Herrmann R."/>
            <person name="Grishin E.V."/>
        </authorList>
    </citation>
    <scope>NUCLEOTIDE SEQUENCE [MRNA]</scope>
    <source>
        <tissue>Venom gland</tissue>
    </source>
</reference>
<reference key="2">
    <citation type="journal article" date="2010" name="J. Biol. Chem.">
        <title>Unique bell-shaped voltage-dependent modulation of Na+ channel gating by novel insect-selective toxins from the spider Agelena orientalis.</title>
        <authorList>
            <person name="Billen B."/>
            <person name="Vassilevski A."/>
            <person name="Nikolsky A."/>
            <person name="Debaveye S."/>
            <person name="Tytgat J."/>
            <person name="Grishin E."/>
        </authorList>
    </citation>
    <scope>PROTEIN SEQUENCE OF 35-72</scope>
    <scope>FUNCTION</scope>
    <scope>SUBCELLULAR LOCATION</scope>
    <scope>TISSUE SPECIFICITY</scope>
    <scope>MASS SPECTROMETRY</scope>
    <scope>AMIDATION AT ASN-72</scope>
    <source>
        <tissue>Venom</tissue>
    </source>
</reference>
<accession>Q5Y4V2</accession>
<protein>
    <recommendedName>
        <fullName evidence="6">U3-agatoxin-Ao1g</fullName>
        <shortName evidence="6">U3-AGTX-Ao1g</shortName>
    </recommendedName>
    <alternativeName>
        <fullName evidence="5">Beta/delta-agatoxin-2</fullName>
    </alternativeName>
    <alternativeName>
        <fullName evidence="7">Mu-2Aga_08</fullName>
    </alternativeName>
</protein>
<name>T4G1G_AGEOR</name>
<feature type="signal peptide" evidence="3">
    <location>
        <begin position="1"/>
        <end position="20"/>
    </location>
</feature>
<feature type="propeptide" id="PRO_5000093667" evidence="4">
    <location>
        <begin position="21"/>
        <end position="34"/>
    </location>
</feature>
<feature type="chain" id="PRO_5000093668" description="U3-agatoxin-Ao1g" evidence="4">
    <location>
        <begin position="35"/>
        <end position="72"/>
    </location>
</feature>
<feature type="modified residue" description="Asparagine amide" evidence="4">
    <location>
        <position position="72"/>
    </location>
</feature>
<feature type="disulfide bond" evidence="2">
    <location>
        <begin position="37"/>
        <end position="53"/>
    </location>
</feature>
<feature type="disulfide bond" evidence="2">
    <location>
        <begin position="44"/>
        <end position="58"/>
    </location>
</feature>
<feature type="disulfide bond" evidence="2">
    <location>
        <begin position="52"/>
        <end position="68"/>
    </location>
</feature>
<feature type="disulfide bond" evidence="2">
    <location>
        <begin position="60"/>
        <end position="66"/>
    </location>
</feature>
<organism>
    <name type="scientific">Agelena orientalis</name>
    <name type="common">Funnel-web spider</name>
    <dbReference type="NCBI Taxonomy" id="293813"/>
    <lineage>
        <taxon>Eukaryota</taxon>
        <taxon>Metazoa</taxon>
        <taxon>Ecdysozoa</taxon>
        <taxon>Arthropoda</taxon>
        <taxon>Chelicerata</taxon>
        <taxon>Arachnida</taxon>
        <taxon>Araneae</taxon>
        <taxon>Araneomorphae</taxon>
        <taxon>Entelegynae</taxon>
        <taxon>Agelenidae</taxon>
        <taxon>Agelena</taxon>
    </lineage>
</organism>
<keyword id="KW-0027">Amidation</keyword>
<keyword id="KW-0903">Direct protein sequencing</keyword>
<keyword id="KW-1015">Disulfide bond</keyword>
<keyword id="KW-0872">Ion channel impairing toxin</keyword>
<keyword id="KW-0960">Knottin</keyword>
<keyword id="KW-0528">Neurotoxin</keyword>
<keyword id="KW-0964">Secreted</keyword>
<keyword id="KW-0732">Signal</keyword>
<keyword id="KW-0800">Toxin</keyword>
<keyword id="KW-0738">Voltage-gated sodium channel impairing toxin</keyword>
<dbReference type="EMBL" id="AY681332">
    <property type="protein sequence ID" value="AAU87892.1"/>
    <property type="molecule type" value="mRNA"/>
</dbReference>
<dbReference type="SMR" id="Q5Y4V2"/>
<dbReference type="ArachnoServer" id="AS000080">
    <property type="toxin name" value="U3-agatoxin-Ao1g"/>
</dbReference>
<dbReference type="GO" id="GO:0005576">
    <property type="term" value="C:extracellular region"/>
    <property type="evidence" value="ECO:0007669"/>
    <property type="project" value="UniProtKB-SubCell"/>
</dbReference>
<dbReference type="GO" id="GO:0017080">
    <property type="term" value="F:sodium channel regulator activity"/>
    <property type="evidence" value="ECO:0007669"/>
    <property type="project" value="UniProtKB-KW"/>
</dbReference>
<dbReference type="GO" id="GO:0090729">
    <property type="term" value="F:toxin activity"/>
    <property type="evidence" value="ECO:0007669"/>
    <property type="project" value="UniProtKB-KW"/>
</dbReference>
<dbReference type="InterPro" id="IPR016328">
    <property type="entry name" value="Beta/delta-agatoxin_fam"/>
</dbReference>
<dbReference type="Pfam" id="PF05980">
    <property type="entry name" value="Toxin_7"/>
    <property type="match status" value="1"/>
</dbReference>
<dbReference type="SUPFAM" id="SSF57059">
    <property type="entry name" value="omega toxin-like"/>
    <property type="match status" value="1"/>
</dbReference>
<dbReference type="PROSITE" id="PS60015">
    <property type="entry name" value="MU_AGATOXIN"/>
    <property type="match status" value="1"/>
</dbReference>
<evidence type="ECO:0000250" key="1"/>
<evidence type="ECO:0000250" key="2">
    <source>
        <dbReference type="UniProtKB" id="P11061"/>
    </source>
</evidence>
<evidence type="ECO:0000255" key="3"/>
<evidence type="ECO:0000269" key="4">
    <source>
    </source>
</evidence>
<evidence type="ECO:0000303" key="5">
    <source>
    </source>
</evidence>
<evidence type="ECO:0000305" key="6"/>
<evidence type="ECO:0000312" key="7">
    <source>
        <dbReference type="EMBL" id="AAU87892.1"/>
    </source>
</evidence>